<feature type="chain" id="PRO_0000134733" description="6,7-dimethyl-8-ribityllumazine synthase">
    <location>
        <begin position="1"/>
        <end position="154"/>
    </location>
</feature>
<feature type="active site" description="Proton donor" evidence="1">
    <location>
        <position position="89"/>
    </location>
</feature>
<feature type="binding site" evidence="1">
    <location>
        <position position="23"/>
    </location>
    <ligand>
        <name>5-amino-6-(D-ribitylamino)uracil</name>
        <dbReference type="ChEBI" id="CHEBI:15934"/>
    </ligand>
</feature>
<feature type="binding site" evidence="1">
    <location>
        <begin position="57"/>
        <end position="59"/>
    </location>
    <ligand>
        <name>5-amino-6-(D-ribitylamino)uracil</name>
        <dbReference type="ChEBI" id="CHEBI:15934"/>
    </ligand>
</feature>
<feature type="binding site" evidence="1">
    <location>
        <begin position="81"/>
        <end position="83"/>
    </location>
    <ligand>
        <name>5-amino-6-(D-ribitylamino)uracil</name>
        <dbReference type="ChEBI" id="CHEBI:15934"/>
    </ligand>
</feature>
<feature type="binding site" evidence="1">
    <location>
        <begin position="86"/>
        <end position="87"/>
    </location>
    <ligand>
        <name>(2S)-2-hydroxy-3-oxobutyl phosphate</name>
        <dbReference type="ChEBI" id="CHEBI:58830"/>
    </ligand>
</feature>
<feature type="binding site" evidence="1">
    <location>
        <position position="114"/>
    </location>
    <ligand>
        <name>5-amino-6-(D-ribitylamino)uracil</name>
        <dbReference type="ChEBI" id="CHEBI:15934"/>
    </ligand>
</feature>
<feature type="binding site" evidence="1">
    <location>
        <position position="128"/>
    </location>
    <ligand>
        <name>(2S)-2-hydroxy-3-oxobutyl phosphate</name>
        <dbReference type="ChEBI" id="CHEBI:58830"/>
    </ligand>
</feature>
<keyword id="KW-1185">Reference proteome</keyword>
<keyword id="KW-0686">Riboflavin biosynthesis</keyword>
<keyword id="KW-0808">Transferase</keyword>
<accession>Q9PIB9</accession>
<accession>Q0PBC7</accession>
<organism>
    <name type="scientific">Campylobacter jejuni subsp. jejuni serotype O:2 (strain ATCC 700819 / NCTC 11168)</name>
    <dbReference type="NCBI Taxonomy" id="192222"/>
    <lineage>
        <taxon>Bacteria</taxon>
        <taxon>Pseudomonadati</taxon>
        <taxon>Campylobacterota</taxon>
        <taxon>Epsilonproteobacteria</taxon>
        <taxon>Campylobacterales</taxon>
        <taxon>Campylobacteraceae</taxon>
        <taxon>Campylobacter</taxon>
    </lineage>
</organism>
<gene>
    <name evidence="1" type="primary">ribH</name>
    <name type="ordered locus">Cj0383c</name>
</gene>
<evidence type="ECO:0000255" key="1">
    <source>
        <dbReference type="HAMAP-Rule" id="MF_00178"/>
    </source>
</evidence>
<proteinExistence type="inferred from homology"/>
<comment type="function">
    <text evidence="1">Catalyzes the formation of 6,7-dimethyl-8-ribityllumazine by condensation of 5-amino-6-(D-ribitylamino)uracil with 3,4-dihydroxy-2-butanone 4-phosphate. This is the penultimate step in the biosynthesis of riboflavin.</text>
</comment>
<comment type="catalytic activity">
    <reaction evidence="1">
        <text>(2S)-2-hydroxy-3-oxobutyl phosphate + 5-amino-6-(D-ribitylamino)uracil = 6,7-dimethyl-8-(1-D-ribityl)lumazine + phosphate + 2 H2O + H(+)</text>
        <dbReference type="Rhea" id="RHEA:26152"/>
        <dbReference type="ChEBI" id="CHEBI:15377"/>
        <dbReference type="ChEBI" id="CHEBI:15378"/>
        <dbReference type="ChEBI" id="CHEBI:15934"/>
        <dbReference type="ChEBI" id="CHEBI:43474"/>
        <dbReference type="ChEBI" id="CHEBI:58201"/>
        <dbReference type="ChEBI" id="CHEBI:58830"/>
        <dbReference type="EC" id="2.5.1.78"/>
    </reaction>
</comment>
<comment type="pathway">
    <text evidence="1">Cofactor biosynthesis; riboflavin biosynthesis; riboflavin from 2-hydroxy-3-oxobutyl phosphate and 5-amino-6-(D-ribitylamino)uracil: step 1/2.</text>
</comment>
<comment type="similarity">
    <text evidence="1">Belongs to the DMRL synthase family.</text>
</comment>
<reference key="1">
    <citation type="journal article" date="2000" name="Nature">
        <title>The genome sequence of the food-borne pathogen Campylobacter jejuni reveals hypervariable sequences.</title>
        <authorList>
            <person name="Parkhill J."/>
            <person name="Wren B.W."/>
            <person name="Mungall K.L."/>
            <person name="Ketley J.M."/>
            <person name="Churcher C.M."/>
            <person name="Basham D."/>
            <person name="Chillingworth T."/>
            <person name="Davies R.M."/>
            <person name="Feltwell T."/>
            <person name="Holroyd S."/>
            <person name="Jagels K."/>
            <person name="Karlyshev A.V."/>
            <person name="Moule S."/>
            <person name="Pallen M.J."/>
            <person name="Penn C.W."/>
            <person name="Quail M.A."/>
            <person name="Rajandream M.A."/>
            <person name="Rutherford K.M."/>
            <person name="van Vliet A.H.M."/>
            <person name="Whitehead S."/>
            <person name="Barrell B.G."/>
        </authorList>
    </citation>
    <scope>NUCLEOTIDE SEQUENCE [LARGE SCALE GENOMIC DNA]</scope>
    <source>
        <strain>ATCC 700819 / NCTC 11168</strain>
    </source>
</reference>
<sequence length="154" mass="16686">MNIIEGKLNLDSNTKIAIINARFNHIITDRLVEGAKDAFLRHGGKEENLSLILVPGAFELPYALKKAIESKKFDAICCVGAVIRGSTPHFDYVSAETTKGIANVSLNHNIPVSFGVLTTDTIEQAIERAGSKAGNKGFEAMTTVIEMLNLSKEL</sequence>
<name>RISB_CAMJE</name>
<dbReference type="EC" id="2.5.1.78" evidence="1"/>
<dbReference type="EMBL" id="AL111168">
    <property type="protein sequence ID" value="CAL34533.1"/>
    <property type="molecule type" value="Genomic_DNA"/>
</dbReference>
<dbReference type="PIR" id="E81381">
    <property type="entry name" value="E81381"/>
</dbReference>
<dbReference type="RefSeq" id="YP_002343820.1">
    <property type="nucleotide sequence ID" value="NC_002163.1"/>
</dbReference>
<dbReference type="SMR" id="Q9PIB9"/>
<dbReference type="IntAct" id="Q9PIB9">
    <property type="interactions" value="73"/>
</dbReference>
<dbReference type="STRING" id="192222.Cj0383c"/>
<dbReference type="PaxDb" id="192222-Cj0383c"/>
<dbReference type="EnsemblBacteria" id="CAL34533">
    <property type="protein sequence ID" value="CAL34533"/>
    <property type="gene ID" value="Cj0383c"/>
</dbReference>
<dbReference type="GeneID" id="904706"/>
<dbReference type="KEGG" id="cje:Cj0383c"/>
<dbReference type="PATRIC" id="fig|192222.6.peg.374"/>
<dbReference type="eggNOG" id="COG0054">
    <property type="taxonomic scope" value="Bacteria"/>
</dbReference>
<dbReference type="HOGENOM" id="CLU_089358_1_1_7"/>
<dbReference type="OrthoDB" id="9809709at2"/>
<dbReference type="BRENDA" id="2.5.1.78">
    <property type="organism ID" value="1087"/>
</dbReference>
<dbReference type="UniPathway" id="UPA00275">
    <property type="reaction ID" value="UER00404"/>
</dbReference>
<dbReference type="Proteomes" id="UP000000799">
    <property type="component" value="Chromosome"/>
</dbReference>
<dbReference type="GO" id="GO:0005829">
    <property type="term" value="C:cytosol"/>
    <property type="evidence" value="ECO:0007669"/>
    <property type="project" value="TreeGrafter"/>
</dbReference>
<dbReference type="GO" id="GO:0009349">
    <property type="term" value="C:riboflavin synthase complex"/>
    <property type="evidence" value="ECO:0007669"/>
    <property type="project" value="InterPro"/>
</dbReference>
<dbReference type="GO" id="GO:0000906">
    <property type="term" value="F:6,7-dimethyl-8-ribityllumazine synthase activity"/>
    <property type="evidence" value="ECO:0007669"/>
    <property type="project" value="UniProtKB-UniRule"/>
</dbReference>
<dbReference type="GO" id="GO:0009231">
    <property type="term" value="P:riboflavin biosynthetic process"/>
    <property type="evidence" value="ECO:0007669"/>
    <property type="project" value="UniProtKB-UniRule"/>
</dbReference>
<dbReference type="CDD" id="cd09209">
    <property type="entry name" value="Lumazine_synthase-I"/>
    <property type="match status" value="1"/>
</dbReference>
<dbReference type="FunFam" id="3.40.50.960:FF:000001">
    <property type="entry name" value="6,7-dimethyl-8-ribityllumazine synthase"/>
    <property type="match status" value="1"/>
</dbReference>
<dbReference type="Gene3D" id="3.40.50.960">
    <property type="entry name" value="Lumazine/riboflavin synthase"/>
    <property type="match status" value="1"/>
</dbReference>
<dbReference type="HAMAP" id="MF_00178">
    <property type="entry name" value="Lumazine_synth"/>
    <property type="match status" value="1"/>
</dbReference>
<dbReference type="InterPro" id="IPR034964">
    <property type="entry name" value="LS"/>
</dbReference>
<dbReference type="InterPro" id="IPR002180">
    <property type="entry name" value="LS/RS"/>
</dbReference>
<dbReference type="InterPro" id="IPR036467">
    <property type="entry name" value="LS/RS_sf"/>
</dbReference>
<dbReference type="NCBIfam" id="TIGR00114">
    <property type="entry name" value="lumazine-synth"/>
    <property type="match status" value="1"/>
</dbReference>
<dbReference type="NCBIfam" id="NF000812">
    <property type="entry name" value="PRK00061.1-4"/>
    <property type="match status" value="1"/>
</dbReference>
<dbReference type="PANTHER" id="PTHR21058:SF0">
    <property type="entry name" value="6,7-DIMETHYL-8-RIBITYLLUMAZINE SYNTHASE"/>
    <property type="match status" value="1"/>
</dbReference>
<dbReference type="PANTHER" id="PTHR21058">
    <property type="entry name" value="6,7-DIMETHYL-8-RIBITYLLUMAZINE SYNTHASE DMRL SYNTHASE LUMAZINE SYNTHASE"/>
    <property type="match status" value="1"/>
</dbReference>
<dbReference type="Pfam" id="PF00885">
    <property type="entry name" value="DMRL_synthase"/>
    <property type="match status" value="1"/>
</dbReference>
<dbReference type="SUPFAM" id="SSF52121">
    <property type="entry name" value="Lumazine synthase"/>
    <property type="match status" value="1"/>
</dbReference>
<protein>
    <recommendedName>
        <fullName evidence="1">6,7-dimethyl-8-ribityllumazine synthase</fullName>
        <shortName evidence="1">DMRL synthase</shortName>
        <shortName evidence="1">LS</shortName>
        <shortName evidence="1">Lumazine synthase</shortName>
        <ecNumber evidence="1">2.5.1.78</ecNumber>
    </recommendedName>
</protein>